<accession>Q7NBG4</accession>
<dbReference type="EMBL" id="AE015450">
    <property type="protein sequence ID" value="AAP56665.1"/>
    <property type="molecule type" value="Genomic_DNA"/>
</dbReference>
<dbReference type="RefSeq" id="WP_011113556.1">
    <property type="nucleotide sequence ID" value="NC_004829.2"/>
</dbReference>
<dbReference type="SMR" id="Q7NBG4"/>
<dbReference type="GeneID" id="93510145"/>
<dbReference type="KEGG" id="mga:MGA_1330d"/>
<dbReference type="HOGENOM" id="CLU_207223_0_0_14"/>
<dbReference type="OrthoDB" id="404044at2"/>
<dbReference type="Proteomes" id="UP000001418">
    <property type="component" value="Chromosome"/>
</dbReference>
<dbReference type="GO" id="GO:1990904">
    <property type="term" value="C:ribonucleoprotein complex"/>
    <property type="evidence" value="ECO:0007669"/>
    <property type="project" value="UniProtKB-KW"/>
</dbReference>
<dbReference type="GO" id="GO:0005840">
    <property type="term" value="C:ribosome"/>
    <property type="evidence" value="ECO:0007669"/>
    <property type="project" value="UniProtKB-KW"/>
</dbReference>
<dbReference type="GO" id="GO:0003735">
    <property type="term" value="F:structural constituent of ribosome"/>
    <property type="evidence" value="ECO:0007669"/>
    <property type="project" value="InterPro"/>
</dbReference>
<dbReference type="GO" id="GO:0006412">
    <property type="term" value="P:translation"/>
    <property type="evidence" value="ECO:0007669"/>
    <property type="project" value="UniProtKB-UniRule"/>
</dbReference>
<dbReference type="HAMAP" id="MF_00358">
    <property type="entry name" value="Ribosomal_bS21"/>
    <property type="match status" value="1"/>
</dbReference>
<dbReference type="InterPro" id="IPR001911">
    <property type="entry name" value="Ribosomal_bS21"/>
</dbReference>
<dbReference type="NCBIfam" id="TIGR00030">
    <property type="entry name" value="S21p"/>
    <property type="match status" value="1"/>
</dbReference>
<dbReference type="Pfam" id="PF01165">
    <property type="entry name" value="Ribosomal_S21"/>
    <property type="match status" value="1"/>
</dbReference>
<organism>
    <name type="scientific">Mycoplasmoides gallisepticum (strain R(low / passage 15 / clone 2))</name>
    <name type="common">Mycoplasma gallisepticum</name>
    <dbReference type="NCBI Taxonomy" id="710127"/>
    <lineage>
        <taxon>Bacteria</taxon>
        <taxon>Bacillati</taxon>
        <taxon>Mycoplasmatota</taxon>
        <taxon>Mycoplasmoidales</taxon>
        <taxon>Mycoplasmoidaceae</taxon>
        <taxon>Mycoplasmoides</taxon>
    </lineage>
</organism>
<name>RS21_MYCGA</name>
<protein>
    <recommendedName>
        <fullName evidence="1">Small ribosomal subunit protein bS21</fullName>
    </recommendedName>
    <alternativeName>
        <fullName evidence="3">30S ribosomal protein S21</fullName>
    </alternativeName>
</protein>
<feature type="chain" id="PRO_0000266708" description="Small ribosomal subunit protein bS21">
    <location>
        <begin position="1"/>
        <end position="60"/>
    </location>
</feature>
<feature type="region of interest" description="Disordered" evidence="2">
    <location>
        <begin position="38"/>
        <end position="60"/>
    </location>
</feature>
<sequence length="60" mass="7378">MPKIEVKDGDLELALRKFKRVASETKRSFLKHEYHLRKGVKRREKEKAARKRLQKKHRMY</sequence>
<comment type="similarity">
    <text evidence="1">Belongs to the bacterial ribosomal protein bS21 family.</text>
</comment>
<proteinExistence type="inferred from homology"/>
<evidence type="ECO:0000255" key="1">
    <source>
        <dbReference type="HAMAP-Rule" id="MF_00358"/>
    </source>
</evidence>
<evidence type="ECO:0000256" key="2">
    <source>
        <dbReference type="SAM" id="MobiDB-lite"/>
    </source>
</evidence>
<evidence type="ECO:0000305" key="3"/>
<gene>
    <name evidence="1" type="primary">rpsU</name>
    <name type="ordered locus">MYCGA3150</name>
    <name type="ORF">MGA_1330d</name>
</gene>
<keyword id="KW-1185">Reference proteome</keyword>
<keyword id="KW-0687">Ribonucleoprotein</keyword>
<keyword id="KW-0689">Ribosomal protein</keyword>
<reference key="1">
    <citation type="journal article" date="2003" name="Microbiology">
        <title>The complete genome sequence of the avian pathogen Mycoplasma gallisepticum strain R(low).</title>
        <authorList>
            <person name="Papazisi L."/>
            <person name="Gorton T.S."/>
            <person name="Kutish G."/>
            <person name="Markham P.F."/>
            <person name="Browning G.F."/>
            <person name="Nguyen D.K."/>
            <person name="Swartzell S."/>
            <person name="Madan A."/>
            <person name="Mahairas G."/>
            <person name="Geary S.J."/>
        </authorList>
    </citation>
    <scope>NUCLEOTIDE SEQUENCE [LARGE SCALE GENOMIC DNA]</scope>
    <source>
        <strain>R(low / passage 15 / clone 2)</strain>
    </source>
</reference>